<name>NHEJ1_MOUSE</name>
<gene>
    <name evidence="16" type="primary">Nhej1</name>
    <name evidence="14" type="synonym">Xlf</name>
</gene>
<proteinExistence type="evidence at protein level"/>
<protein>
    <recommendedName>
        <fullName evidence="15">Non-homologous end-joining factor 1</fullName>
    </recommendedName>
    <alternativeName>
        <fullName evidence="14">Protein cernunnos</fullName>
    </alternativeName>
    <alternativeName>
        <fullName evidence="14">XRCC4-like factor</fullName>
    </alternativeName>
</protein>
<comment type="function">
    <text evidence="1 2 4 6 7 8 9 10 11 12">DNA repair protein involved in DNA non-homologous end joining (NHEJ); required for double-strand break (DSB) repair and V(D)J recombination (PubMed:17360556, PubMed:27601299, PubMed:27601633, PubMed:27798842, PubMed:27830975, PubMed:28051062, PubMed:29077092, PubMed:30017584). It is also involved in telomere maintenance (By similarity). Plays a key role in NHEJ by promoting the ligation of various mismatched and non-cohesive ends (PubMed:17360556). Interacts with POLL (DNA polymerase lambda); promoting POLL recruitment to double-strand breaks (DSBs) and stimulation of the end-filling activity of POLL (By similarity). May act in concert with XRCC5-XRCC6 (Ku) to stimulate XRCC4-mediated joining of blunt ends and several types of mismatched ends that are non-complementary or partially complementary (PubMed:17360556). In some studies, has been shown to associate with XRCC4 to form alternating helical filaments that bridge DNA and act like a bandage, holding together the broken DNA until it is repaired (By similarity). Alternatively, it has also been shown that rather than forming filaments, a single NHEJ1 dimer interacts through both head domains with XRCC4 to promote the close alignment of DNA ends (By similarity). The XRCC4-NHEJ1/XLF subcomplex binds to the DNA fragments of a DSB in a highly diffusive manner and robustly bridges two independent DNA molecules, holding the broken DNA fragments in close proximity to one other (By similarity). The mobility of the bridges ensures that the ends remain accessible for further processing by other repair factors (By similarity). Binds DNA in a length-dependent manner (By similarity).</text>
</comment>
<comment type="subunit">
    <text evidence="2">Homodimer; mainly exists as a homodimer when not associated with XRCC4. Interacts with XRCC4; the interaction is direct and is mediated via a head-to-head interaction between N-terminal head regions. Component of the core long-range non-homologous end joining (NHEJ) complex (also named DNA-PK complex) composed of PRKDC, LIG4, XRCC4, XRCC6/Ku70, XRCC5/Ku86 and NHEJ1/XLF. Additional component of the NHEJ complex includes PAXX. Following autophosphorylation, PRKDC dissociates from DNA, leading to formation of the short-range NHEJ complex, composed of LIG4, XRCC4, XRCC6/Ku70, XRCC5/Ku86 and NHEJ1/XLF. Interacts with POLL (DNA polymerase lambda); promoting POLL recruitment to double-strand breaks (DSBs) and stimulation of the end-filling activity of POLL.</text>
</comment>
<comment type="subcellular location">
    <subcellularLocation>
        <location evidence="2">Nucleus</location>
    </subcellularLocation>
    <subcellularLocation>
        <location evidence="2">Chromosome</location>
    </subcellularLocation>
    <text evidence="2">Localizes to site of double-strand breaks; recruitment is dependent on XRCC5-XRCC6 (Ku) heterodimer.</text>
</comment>
<comment type="alternative products">
    <event type="alternative splicing"/>
    <isoform>
        <id>Q3KNJ2-1</id>
        <name>1</name>
        <sequence type="displayed"/>
    </isoform>
    <isoform>
        <id>Q3KNJ2-2</id>
        <name>2</name>
        <sequence type="described" ref="VSP_017690"/>
    </isoform>
</comment>
<comment type="domain">
    <text evidence="2">The coiled-coil region mediates homodimerization.</text>
</comment>
<comment type="domain">
    <text evidence="2">The Leu-lock (Leu-115) site inserts into a hydrophobic pocket in XRCC4.</text>
</comment>
<comment type="domain">
    <text evidence="1">The XLM motif (also called the KBM motif or KBMX motif) and the interior region of the C-terminal tail preceding the XLM motif are essential for DNA end joining. The sequence of the C-terminal tail is not critical for its role in end joining but it must be sufficiently long to interact with XRCC4 and to stabilize the interaction of XRCC4 with LIG4. A single XLM motif and C-terminal tail is sufficient to promote end joining.</text>
</comment>
<comment type="PTM">
    <text evidence="2">Phosphorylated by PRKDC at the C-terminus in response to DNA damage. Phosphorylation by PRKDC at the C-terminus of XRCC4 and NHEJ1/XLF are highly redundant and regulate ability of the XRCC4-NHEJ1/XLF subcomplex to bridge DNA. Phosphorylation does not prevent interaction with XRCC4 but disrupts ability to bridge DNA and promotes detachment from DNA.</text>
</comment>
<comment type="disruption phenotype">
    <text evidence="4 5 6 7 8 9 10 11 12">Embryonic stem cells are highly sensitive to ionizing radiation and have intrinsic DNA double-strand break repair defects (PubMed:17360556). In contrast, knockout mice only have a relatively mild phenotype with no growth defects, neuronal cell death or overt immunodeficiency (PubMed:18775323). Mature lymphocyte numbers are slightly decreased, and pro-B lines, while ionizing radiation-sensitive, perform V(D)J recombination at nearly wild-type levels (PubMed:18775323). Mice lacking both Paxx and Nhej1/Xlf show embryonic lethality caused by severe defects in classical non-homologous end joining (NHEJ) (PubMed:27601299, PubMed:27601633, PubMed:27798842, PubMed:27830975, PubMed:28051062, PubMed:29077092). Mice lacking both Cyren and Nhej1/Xlf show embryonic lethality caused by severe defects in classical non-homologous end joining (NHEJ) (PubMed:30017584).</text>
</comment>
<comment type="similarity">
    <text evidence="15">Belongs to the XRCC4-XLF family. XLF subfamily.</text>
</comment>
<comment type="sequence caution" evidence="15">
    <conflict type="erroneous initiation">
        <sequence resource="EMBL-CDS" id="BAB24611"/>
    </conflict>
</comment>
<organism>
    <name type="scientific">Mus musculus</name>
    <name type="common">Mouse</name>
    <dbReference type="NCBI Taxonomy" id="10090"/>
    <lineage>
        <taxon>Eukaryota</taxon>
        <taxon>Metazoa</taxon>
        <taxon>Chordata</taxon>
        <taxon>Craniata</taxon>
        <taxon>Vertebrata</taxon>
        <taxon>Euteleostomi</taxon>
        <taxon>Mammalia</taxon>
        <taxon>Eutheria</taxon>
        <taxon>Euarchontoglires</taxon>
        <taxon>Glires</taxon>
        <taxon>Rodentia</taxon>
        <taxon>Myomorpha</taxon>
        <taxon>Muroidea</taxon>
        <taxon>Muridae</taxon>
        <taxon>Murinae</taxon>
        <taxon>Mus</taxon>
        <taxon>Mus</taxon>
    </lineage>
</organism>
<dbReference type="EMBL" id="AK006481">
    <property type="protein sequence ID" value="BAB24611.1"/>
    <property type="status" value="ALT_INIT"/>
    <property type="molecule type" value="mRNA"/>
</dbReference>
<dbReference type="EMBL" id="BC006063">
    <property type="protein sequence ID" value="AAH06063.1"/>
    <property type="molecule type" value="mRNA"/>
</dbReference>
<dbReference type="EMBL" id="BC107252">
    <property type="protein sequence ID" value="AAI07253.1"/>
    <property type="molecule type" value="mRNA"/>
</dbReference>
<dbReference type="EMBL" id="BC107253">
    <property type="protein sequence ID" value="AAI07254.1"/>
    <property type="molecule type" value="mRNA"/>
</dbReference>
<dbReference type="EMBL" id="BC132359">
    <property type="protein sequence ID" value="AAI32360.1"/>
    <property type="molecule type" value="mRNA"/>
</dbReference>
<dbReference type="EMBL" id="BC132361">
    <property type="protein sequence ID" value="AAI32362.1"/>
    <property type="molecule type" value="mRNA"/>
</dbReference>
<dbReference type="RefSeq" id="NP_001419678.1">
    <molecule id="Q3KNJ2-1"/>
    <property type="nucleotide sequence ID" value="NM_001432749.1"/>
</dbReference>
<dbReference type="RefSeq" id="NP_001419679.1">
    <molecule id="Q3KNJ2-1"/>
    <property type="nucleotide sequence ID" value="NM_001432750.1"/>
</dbReference>
<dbReference type="RefSeq" id="NP_001419680.1">
    <molecule id="Q3KNJ2-1"/>
    <property type="nucleotide sequence ID" value="NM_001432751.1"/>
</dbReference>
<dbReference type="RefSeq" id="NP_001419681.1">
    <molecule id="Q3KNJ2-1"/>
    <property type="nucleotide sequence ID" value="NM_001432752.1"/>
</dbReference>
<dbReference type="RefSeq" id="NP_001419688.1">
    <molecule id="Q3KNJ2-2"/>
    <property type="nucleotide sequence ID" value="NM_001432759.1"/>
</dbReference>
<dbReference type="RefSeq" id="NP_001419689.1">
    <molecule id="Q3KNJ2-2"/>
    <property type="nucleotide sequence ID" value="NM_001432760.1"/>
</dbReference>
<dbReference type="RefSeq" id="NP_001419690.1">
    <molecule id="Q3KNJ2-2"/>
    <property type="nucleotide sequence ID" value="NM_001432761.1"/>
</dbReference>
<dbReference type="RefSeq" id="NP_083618.3">
    <molecule id="Q3KNJ2-1"/>
    <property type="nucleotide sequence ID" value="NM_029342.5"/>
</dbReference>
<dbReference type="SMR" id="Q3KNJ2"/>
<dbReference type="FunCoup" id="Q3KNJ2">
    <property type="interactions" value="512"/>
</dbReference>
<dbReference type="IntAct" id="Q3KNJ2">
    <property type="interactions" value="1"/>
</dbReference>
<dbReference type="MINT" id="Q3KNJ2"/>
<dbReference type="STRING" id="10090.ENSMUSP00000116797"/>
<dbReference type="iPTMnet" id="Q3KNJ2"/>
<dbReference type="PhosphoSitePlus" id="Q3KNJ2"/>
<dbReference type="PaxDb" id="10090-ENSMUSP00000116797"/>
<dbReference type="PeptideAtlas" id="Q3KNJ2"/>
<dbReference type="ProteomicsDB" id="293652">
    <molecule id="Q3KNJ2-1"/>
</dbReference>
<dbReference type="ProteomicsDB" id="293653">
    <molecule id="Q3KNJ2-2"/>
</dbReference>
<dbReference type="Antibodypedia" id="34300">
    <property type="antibodies" value="482 antibodies from 31 providers"/>
</dbReference>
<dbReference type="Ensembl" id="ENSMUST00000152855.3">
    <molecule id="Q3KNJ2-1"/>
    <property type="protein sequence ID" value="ENSMUSP00000116797.3"/>
    <property type="gene ID" value="ENSMUSG00000026162.9"/>
</dbReference>
<dbReference type="GeneID" id="75570"/>
<dbReference type="KEGG" id="mmu:75570"/>
<dbReference type="UCSC" id="uc029qpd.1">
    <molecule id="Q3KNJ2-1"/>
    <property type="organism name" value="mouse"/>
</dbReference>
<dbReference type="AGR" id="MGI:1922820"/>
<dbReference type="CTD" id="79840"/>
<dbReference type="MGI" id="MGI:1922820">
    <property type="gene designation" value="Nhej1"/>
</dbReference>
<dbReference type="eggNOG" id="ENOG502S0R3">
    <property type="taxonomic scope" value="Eukaryota"/>
</dbReference>
<dbReference type="GeneTree" id="ENSGT00390000009940"/>
<dbReference type="InParanoid" id="Q3KNJ2"/>
<dbReference type="OMA" id="LPFYWHF"/>
<dbReference type="OrthoDB" id="2155935at2759"/>
<dbReference type="PhylomeDB" id="Q3KNJ2"/>
<dbReference type="Reactome" id="R-MMU-5693571">
    <property type="pathway name" value="Nonhomologous End-Joining (NHEJ)"/>
</dbReference>
<dbReference type="BioGRID-ORCS" id="75570">
    <property type="hits" value="17 hits in 90 CRISPR screens"/>
</dbReference>
<dbReference type="ChiTaRS" id="Nhej1">
    <property type="organism name" value="mouse"/>
</dbReference>
<dbReference type="PRO" id="PR:Q3KNJ2"/>
<dbReference type="Proteomes" id="UP000000589">
    <property type="component" value="Chromosome 1"/>
</dbReference>
<dbReference type="RNAct" id="Q3KNJ2">
    <property type="molecule type" value="protein"/>
</dbReference>
<dbReference type="Bgee" id="ENSMUSG00000026162">
    <property type="expression patterns" value="Expressed in yolk sac and 127 other cell types or tissues"/>
</dbReference>
<dbReference type="ExpressionAtlas" id="Q3KNJ2">
    <property type="expression patterns" value="baseline and differential"/>
</dbReference>
<dbReference type="GO" id="GO:0005958">
    <property type="term" value="C:DNA-dependent protein kinase-DNA ligase 4 complex"/>
    <property type="evidence" value="ECO:0000250"/>
    <property type="project" value="UniProtKB"/>
</dbReference>
<dbReference type="GO" id="GO:0001650">
    <property type="term" value="C:fibrillar center"/>
    <property type="evidence" value="ECO:0007669"/>
    <property type="project" value="Ensembl"/>
</dbReference>
<dbReference type="GO" id="GO:0070419">
    <property type="term" value="C:nonhomologous end joining complex"/>
    <property type="evidence" value="ECO:0000250"/>
    <property type="project" value="UniProtKB"/>
</dbReference>
<dbReference type="GO" id="GO:0005654">
    <property type="term" value="C:nucleoplasm"/>
    <property type="evidence" value="ECO:0007669"/>
    <property type="project" value="Ensembl"/>
</dbReference>
<dbReference type="GO" id="GO:0005634">
    <property type="term" value="C:nucleus"/>
    <property type="evidence" value="ECO:0000250"/>
    <property type="project" value="UniProtKB"/>
</dbReference>
<dbReference type="GO" id="GO:0035861">
    <property type="term" value="C:site of double-strand break"/>
    <property type="evidence" value="ECO:0000250"/>
    <property type="project" value="UniProtKB"/>
</dbReference>
<dbReference type="GO" id="GO:0045027">
    <property type="term" value="F:DNA end binding"/>
    <property type="evidence" value="ECO:0000250"/>
    <property type="project" value="UniProtKB"/>
</dbReference>
<dbReference type="GO" id="GO:0070182">
    <property type="term" value="F:DNA polymerase binding"/>
    <property type="evidence" value="ECO:0007669"/>
    <property type="project" value="Ensembl"/>
</dbReference>
<dbReference type="GO" id="GO:0030183">
    <property type="term" value="P:B cell differentiation"/>
    <property type="evidence" value="ECO:0000250"/>
    <property type="project" value="UniProtKB"/>
</dbReference>
<dbReference type="GO" id="GO:0006303">
    <property type="term" value="P:double-strand break repair via nonhomologous end joining"/>
    <property type="evidence" value="ECO:0000315"/>
    <property type="project" value="UniProtKB"/>
</dbReference>
<dbReference type="GO" id="GO:0033152">
    <property type="term" value="P:immunoglobulin V(D)J recombination"/>
    <property type="evidence" value="ECO:0000250"/>
    <property type="project" value="UniProtKB"/>
</dbReference>
<dbReference type="GO" id="GO:0010212">
    <property type="term" value="P:response to ionizing radiation"/>
    <property type="evidence" value="ECO:0000250"/>
    <property type="project" value="UniProtKB"/>
</dbReference>
<dbReference type="GO" id="GO:0030217">
    <property type="term" value="P:T cell differentiation"/>
    <property type="evidence" value="ECO:0000250"/>
    <property type="project" value="UniProtKB"/>
</dbReference>
<dbReference type="GO" id="GO:0000723">
    <property type="term" value="P:telomere maintenance"/>
    <property type="evidence" value="ECO:0000250"/>
    <property type="project" value="UniProtKB"/>
</dbReference>
<dbReference type="CDD" id="cd22285">
    <property type="entry name" value="HD_XLF_N"/>
    <property type="match status" value="1"/>
</dbReference>
<dbReference type="FunFam" id="1.10.287.450:FF:000003">
    <property type="entry name" value="Non-homologous end-joining factor 1"/>
    <property type="match status" value="1"/>
</dbReference>
<dbReference type="FunFam" id="2.170.210.10:FF:000001">
    <property type="entry name" value="Non-homologous end-joining factor 1"/>
    <property type="match status" value="1"/>
</dbReference>
<dbReference type="Gene3D" id="2.170.210.10">
    <property type="entry name" value="DNA double-strand break repair and VJ recombination XRCC4, N-terminal"/>
    <property type="match status" value="1"/>
</dbReference>
<dbReference type="Gene3D" id="1.10.287.450">
    <property type="entry name" value="Helix hairpin bin"/>
    <property type="match status" value="1"/>
</dbReference>
<dbReference type="InterPro" id="IPR052287">
    <property type="entry name" value="NHEJ_factor"/>
</dbReference>
<dbReference type="InterPro" id="IPR053829">
    <property type="entry name" value="XLF-like_CC"/>
</dbReference>
<dbReference type="InterPro" id="IPR015381">
    <property type="entry name" value="XLF-like_N"/>
</dbReference>
<dbReference type="InterPro" id="IPR038051">
    <property type="entry name" value="XRCC4-like_N_sf"/>
</dbReference>
<dbReference type="PANTHER" id="PTHR32235">
    <property type="entry name" value="NON-HOMOLOGOUS END-JOINING FACTOR 1"/>
    <property type="match status" value="1"/>
</dbReference>
<dbReference type="PANTHER" id="PTHR32235:SF1">
    <property type="entry name" value="NON-HOMOLOGOUS END-JOINING FACTOR 1"/>
    <property type="match status" value="1"/>
</dbReference>
<dbReference type="Pfam" id="PF09302">
    <property type="entry name" value="XLF"/>
    <property type="match status" value="1"/>
</dbReference>
<dbReference type="Pfam" id="PF21928">
    <property type="entry name" value="XLF_CC"/>
    <property type="match status" value="1"/>
</dbReference>
<feature type="chain" id="PRO_0000228655" description="Non-homologous end-joining factor 1">
    <location>
        <begin position="1"/>
        <end position="295"/>
    </location>
</feature>
<feature type="region of interest" description="Globular head" evidence="2">
    <location>
        <begin position="1"/>
        <end position="135"/>
    </location>
</feature>
<feature type="region of interest" description="C-terminal tail" evidence="1">
    <location>
        <begin position="224"/>
        <end position="284"/>
    </location>
</feature>
<feature type="region of interest" description="Disordered" evidence="3">
    <location>
        <begin position="228"/>
        <end position="295"/>
    </location>
</feature>
<feature type="coiled-coil region" evidence="2">
    <location>
        <begin position="128"/>
        <end position="170"/>
    </location>
</feature>
<feature type="short sequence motif" description="XLM" evidence="2">
    <location>
        <begin position="285"/>
        <end position="295"/>
    </location>
</feature>
<feature type="compositionally biased region" description="Polar residues" evidence="3">
    <location>
        <begin position="237"/>
        <end position="251"/>
    </location>
</feature>
<feature type="compositionally biased region" description="Basic residues" evidence="3">
    <location>
        <begin position="278"/>
        <end position="295"/>
    </location>
</feature>
<feature type="site" description="Leu-lock" evidence="2">
    <location>
        <position position="115"/>
    </location>
</feature>
<feature type="modified residue" description="Phosphoserine" evidence="2">
    <location>
        <position position="132"/>
    </location>
</feature>
<feature type="modified residue" description="Phosphoserine" evidence="17">
    <location>
        <position position="245"/>
    </location>
</feature>
<feature type="modified residue" description="Phosphothreonine" evidence="2">
    <location>
        <position position="262"/>
    </location>
</feature>
<feature type="splice variant" id="VSP_017690" description="In isoform 2." evidence="13">
    <location>
        <begin position="131"/>
        <end position="196"/>
    </location>
</feature>
<feature type="sequence conflict" description="In Ref. 2; AAH06063." evidence="15" ref="2">
    <original>S</original>
    <variation>P</variation>
    <location>
        <position position="260"/>
    </location>
</feature>
<feature type="sequence conflict" description="In Ref. 2; AAH06063." evidence="15" ref="2">
    <original>R</original>
    <variation>Q</variation>
    <location>
        <position position="281"/>
    </location>
</feature>
<reference key="1">
    <citation type="journal article" date="2005" name="Science">
        <title>The transcriptional landscape of the mammalian genome.</title>
        <authorList>
            <person name="Carninci P."/>
            <person name="Kasukawa T."/>
            <person name="Katayama S."/>
            <person name="Gough J."/>
            <person name="Frith M.C."/>
            <person name="Maeda N."/>
            <person name="Oyama R."/>
            <person name="Ravasi T."/>
            <person name="Lenhard B."/>
            <person name="Wells C."/>
            <person name="Kodzius R."/>
            <person name="Shimokawa K."/>
            <person name="Bajic V.B."/>
            <person name="Brenner S.E."/>
            <person name="Batalov S."/>
            <person name="Forrest A.R."/>
            <person name="Zavolan M."/>
            <person name="Davis M.J."/>
            <person name="Wilming L.G."/>
            <person name="Aidinis V."/>
            <person name="Allen J.E."/>
            <person name="Ambesi-Impiombato A."/>
            <person name="Apweiler R."/>
            <person name="Aturaliya R.N."/>
            <person name="Bailey T.L."/>
            <person name="Bansal M."/>
            <person name="Baxter L."/>
            <person name="Beisel K.W."/>
            <person name="Bersano T."/>
            <person name="Bono H."/>
            <person name="Chalk A.M."/>
            <person name="Chiu K.P."/>
            <person name="Choudhary V."/>
            <person name="Christoffels A."/>
            <person name="Clutterbuck D.R."/>
            <person name="Crowe M.L."/>
            <person name="Dalla E."/>
            <person name="Dalrymple B.P."/>
            <person name="de Bono B."/>
            <person name="Della Gatta G."/>
            <person name="di Bernardo D."/>
            <person name="Down T."/>
            <person name="Engstrom P."/>
            <person name="Fagiolini M."/>
            <person name="Faulkner G."/>
            <person name="Fletcher C.F."/>
            <person name="Fukushima T."/>
            <person name="Furuno M."/>
            <person name="Futaki S."/>
            <person name="Gariboldi M."/>
            <person name="Georgii-Hemming P."/>
            <person name="Gingeras T.R."/>
            <person name="Gojobori T."/>
            <person name="Green R.E."/>
            <person name="Gustincich S."/>
            <person name="Harbers M."/>
            <person name="Hayashi Y."/>
            <person name="Hensch T.K."/>
            <person name="Hirokawa N."/>
            <person name="Hill D."/>
            <person name="Huminiecki L."/>
            <person name="Iacono M."/>
            <person name="Ikeo K."/>
            <person name="Iwama A."/>
            <person name="Ishikawa T."/>
            <person name="Jakt M."/>
            <person name="Kanapin A."/>
            <person name="Katoh M."/>
            <person name="Kawasawa Y."/>
            <person name="Kelso J."/>
            <person name="Kitamura H."/>
            <person name="Kitano H."/>
            <person name="Kollias G."/>
            <person name="Krishnan S.P."/>
            <person name="Kruger A."/>
            <person name="Kummerfeld S.K."/>
            <person name="Kurochkin I.V."/>
            <person name="Lareau L.F."/>
            <person name="Lazarevic D."/>
            <person name="Lipovich L."/>
            <person name="Liu J."/>
            <person name="Liuni S."/>
            <person name="McWilliam S."/>
            <person name="Madan Babu M."/>
            <person name="Madera M."/>
            <person name="Marchionni L."/>
            <person name="Matsuda H."/>
            <person name="Matsuzawa S."/>
            <person name="Miki H."/>
            <person name="Mignone F."/>
            <person name="Miyake S."/>
            <person name="Morris K."/>
            <person name="Mottagui-Tabar S."/>
            <person name="Mulder N."/>
            <person name="Nakano N."/>
            <person name="Nakauchi H."/>
            <person name="Ng P."/>
            <person name="Nilsson R."/>
            <person name="Nishiguchi S."/>
            <person name="Nishikawa S."/>
            <person name="Nori F."/>
            <person name="Ohara O."/>
            <person name="Okazaki Y."/>
            <person name="Orlando V."/>
            <person name="Pang K.C."/>
            <person name="Pavan W.J."/>
            <person name="Pavesi G."/>
            <person name="Pesole G."/>
            <person name="Petrovsky N."/>
            <person name="Piazza S."/>
            <person name="Reed J."/>
            <person name="Reid J.F."/>
            <person name="Ring B.Z."/>
            <person name="Ringwald M."/>
            <person name="Rost B."/>
            <person name="Ruan Y."/>
            <person name="Salzberg S.L."/>
            <person name="Sandelin A."/>
            <person name="Schneider C."/>
            <person name="Schoenbach C."/>
            <person name="Sekiguchi K."/>
            <person name="Semple C.A."/>
            <person name="Seno S."/>
            <person name="Sessa L."/>
            <person name="Sheng Y."/>
            <person name="Shibata Y."/>
            <person name="Shimada H."/>
            <person name="Shimada K."/>
            <person name="Silva D."/>
            <person name="Sinclair B."/>
            <person name="Sperling S."/>
            <person name="Stupka E."/>
            <person name="Sugiura K."/>
            <person name="Sultana R."/>
            <person name="Takenaka Y."/>
            <person name="Taki K."/>
            <person name="Tammoja K."/>
            <person name="Tan S.L."/>
            <person name="Tang S."/>
            <person name="Taylor M.S."/>
            <person name="Tegner J."/>
            <person name="Teichmann S.A."/>
            <person name="Ueda H.R."/>
            <person name="van Nimwegen E."/>
            <person name="Verardo R."/>
            <person name="Wei C.L."/>
            <person name="Yagi K."/>
            <person name="Yamanishi H."/>
            <person name="Zabarovsky E."/>
            <person name="Zhu S."/>
            <person name="Zimmer A."/>
            <person name="Hide W."/>
            <person name="Bult C."/>
            <person name="Grimmond S.M."/>
            <person name="Teasdale R.D."/>
            <person name="Liu E.T."/>
            <person name="Brusic V."/>
            <person name="Quackenbush J."/>
            <person name="Wahlestedt C."/>
            <person name="Mattick J.S."/>
            <person name="Hume D.A."/>
            <person name="Kai C."/>
            <person name="Sasaki D."/>
            <person name="Tomaru Y."/>
            <person name="Fukuda S."/>
            <person name="Kanamori-Katayama M."/>
            <person name="Suzuki M."/>
            <person name="Aoki J."/>
            <person name="Arakawa T."/>
            <person name="Iida J."/>
            <person name="Imamura K."/>
            <person name="Itoh M."/>
            <person name="Kato T."/>
            <person name="Kawaji H."/>
            <person name="Kawagashira N."/>
            <person name="Kawashima T."/>
            <person name="Kojima M."/>
            <person name="Kondo S."/>
            <person name="Konno H."/>
            <person name="Nakano K."/>
            <person name="Ninomiya N."/>
            <person name="Nishio T."/>
            <person name="Okada M."/>
            <person name="Plessy C."/>
            <person name="Shibata K."/>
            <person name="Shiraki T."/>
            <person name="Suzuki S."/>
            <person name="Tagami M."/>
            <person name="Waki K."/>
            <person name="Watahiki A."/>
            <person name="Okamura-Oho Y."/>
            <person name="Suzuki H."/>
            <person name="Kawai J."/>
            <person name="Hayashizaki Y."/>
        </authorList>
    </citation>
    <scope>NUCLEOTIDE SEQUENCE [LARGE SCALE MRNA] (ISOFORM 2)</scope>
    <source>
        <strain>C57BL/6J</strain>
        <tissue>Testis</tissue>
    </source>
</reference>
<reference key="2">
    <citation type="journal article" date="2004" name="Genome Res.">
        <title>The status, quality, and expansion of the NIH full-length cDNA project: the Mammalian Gene Collection (MGC).</title>
        <authorList>
            <consortium name="The MGC Project Team"/>
        </authorList>
    </citation>
    <scope>NUCLEOTIDE SEQUENCE [LARGE SCALE MRNA] (ISOFORM 1)</scope>
    <source>
        <strain>Czech II</strain>
        <tissue>Brain</tissue>
        <tissue>Mammary tumor</tissue>
    </source>
</reference>
<reference key="3">
    <citation type="journal article" date="2007" name="Proc. Natl. Acad. Sci. U.S.A.">
        <title>Defective DNA repair and increased genomic instability in Cernunnos-XLF-deficient murine ES cells.</title>
        <authorList>
            <person name="Zha S."/>
            <person name="Alt F.W."/>
            <person name="Cheng H.-L."/>
            <person name="Brush J.W."/>
            <person name="Li G."/>
        </authorList>
    </citation>
    <scope>FUNCTION</scope>
    <scope>DISRUPTION PHENOTYPE</scope>
</reference>
<reference key="4">
    <citation type="journal article" date="2008" name="Mol. Cell">
        <title>Lymphocyte-specific compensation for XLF/cernunnos end-joining functions in V(D)J recombination.</title>
        <authorList>
            <person name="Li G."/>
            <person name="Alt F.W."/>
            <person name="Cheng H.L."/>
            <person name="Brush J.W."/>
            <person name="Goff P.H."/>
            <person name="Murphy M.M."/>
            <person name="Franco S."/>
            <person name="Zhang Y."/>
            <person name="Zha S."/>
        </authorList>
    </citation>
    <scope>DISRUPTION PHENOTYPE</scope>
</reference>
<reference key="5">
    <citation type="journal article" date="2010" name="Cell">
        <title>A tissue-specific atlas of mouse protein phosphorylation and expression.</title>
        <authorList>
            <person name="Huttlin E.L."/>
            <person name="Jedrychowski M.P."/>
            <person name="Elias J.E."/>
            <person name="Goswami T."/>
            <person name="Rad R."/>
            <person name="Beausoleil S.A."/>
            <person name="Villen J."/>
            <person name="Haas W."/>
            <person name="Sowa M.E."/>
            <person name="Gygi S.P."/>
        </authorList>
    </citation>
    <scope>PHOSPHORYLATION [LARGE SCALE ANALYSIS] AT SER-245</scope>
    <scope>IDENTIFICATION BY MASS SPECTROMETRY [LARGE SCALE ANALYSIS]</scope>
    <source>
        <tissue>Testis</tissue>
    </source>
</reference>
<reference key="6">
    <citation type="journal article" date="2016" name="Cell Rep.">
        <title>Specific roles of XRCC4 paralogs PAXX and XLF during V(D)J recombination.</title>
        <authorList>
            <person name="Lescale C."/>
            <person name="Lenden Hasse H."/>
            <person name="Blackford A.N."/>
            <person name="Balmus G."/>
            <person name="Bianchi J.J."/>
            <person name="Yu W."/>
            <person name="Bacoccina L."/>
            <person name="Jarade A."/>
            <person name="Clouin C."/>
            <person name="Sivapalan R."/>
            <person name="Reina-San-Martin B."/>
            <person name="Jackson S.P."/>
            <person name="Deriano L."/>
        </authorList>
    </citation>
    <scope>FUNCTION</scope>
    <scope>DISRUPTION PHENOTYPE</scope>
</reference>
<reference key="7">
    <citation type="journal article" date="2016" name="Genes Dev.">
        <title>Synthetic lethality between PAXX and XLF in mammalian development.</title>
        <authorList>
            <person name="Balmus G."/>
            <person name="Barros A.C."/>
            <person name="Wijnhoven P.W."/>
            <person name="Lescale C."/>
            <person name="Hasse H.L."/>
            <person name="Boroviak K."/>
            <person name="le Sage C."/>
            <person name="Doe B."/>
            <person name="Speak A.O."/>
            <person name="Galli A."/>
            <person name="Jacobsen M."/>
            <person name="Deriano L."/>
            <person name="Adams D.J."/>
            <person name="Blackford A.N."/>
            <person name="Jackson S.P."/>
        </authorList>
    </citation>
    <scope>FUNCTION</scope>
    <scope>DISRUPTION PHENOTYPE</scope>
</reference>
<reference key="8">
    <citation type="journal article" date="2016" name="Proc. Natl. Acad. Sci. U.S.A.">
        <title>PAXX and XLF DNA repair factors are functionally redundant in joining DNA breaks in a G1-arrested progenitor B-cell line.</title>
        <authorList>
            <person name="Kumar V."/>
            <person name="Alt F.W."/>
            <person name="Frock R.L."/>
        </authorList>
    </citation>
    <scope>FUNCTION</scope>
    <scope>DISRUPTION PHENOTYPE</scope>
</reference>
<reference key="9">
    <citation type="journal article" date="2017" name="Cell Cycle">
        <title>Deficiency of XLF and PAXX prevents DNA double-strand break repair by non-homologous end joining in lymphocytes.</title>
        <authorList>
            <person name="Hung P.J."/>
            <person name="Chen B.R."/>
            <person name="George R."/>
            <person name="Liberman C."/>
            <person name="Morales A.J."/>
            <person name="Colon-Ortiz P."/>
            <person name="Tyler J.K."/>
            <person name="Sleckman B.P."/>
            <person name="Bredemeyer A.L."/>
        </authorList>
    </citation>
    <scope>FUNCTION</scope>
    <scope>DISRUPTION PHENOTYPE</scope>
</reference>
<reference key="10">
    <citation type="journal article" date="2017" name="Nat. Commun.">
        <title>PAXX promotes KU accumulation at DNA breaks and is essential for end-joining in XLF-deficient mice.</title>
        <authorList>
            <person name="Liu X."/>
            <person name="Shao Z."/>
            <person name="Jiang W."/>
            <person name="Lee B.J."/>
            <person name="Zha S."/>
        </authorList>
    </citation>
    <scope>FUNCTION</scope>
    <scope>DISRUPTION PHENOTYPE</scope>
</reference>
<reference key="11">
    <citation type="journal article" date="2018" name="Cell Death Differ.">
        <title>PAXX and Xlf interplay revealed by impaired CNS development and immunodeficiency of double KO mice.</title>
        <authorList>
            <person name="Abramowski V."/>
            <person name="Etienne O."/>
            <person name="Elsaid R."/>
            <person name="Yang J."/>
            <person name="Berland A."/>
            <person name="Kermasson L."/>
            <person name="Roch B."/>
            <person name="Musilli S."/>
            <person name="Moussu J.P."/>
            <person name="Lipson-Ruffert K."/>
            <person name="Revy P."/>
            <person name="Cumano A."/>
            <person name="Boussin F.D."/>
            <person name="de Villartay J.P."/>
        </authorList>
    </citation>
    <scope>FUNCTION</scope>
    <scope>DISRUPTION PHENOTYPE</scope>
</reference>
<reference key="12">
    <citation type="journal article" date="2018" name="Mol. Cell">
        <title>MRI is a DNA damage response adaptor during classical non-homologous end joining.</title>
        <authorList>
            <person name="Hung P.J."/>
            <person name="Johnson B."/>
            <person name="Chen B.R."/>
            <person name="Byrum A.K."/>
            <person name="Bredemeyer A.L."/>
            <person name="Yewdell W.T."/>
            <person name="Johnson T.E."/>
            <person name="Lee B.J."/>
            <person name="Deivasigamani S."/>
            <person name="Hindi I."/>
            <person name="Amatya P."/>
            <person name="Gross M.L."/>
            <person name="Paull T.T."/>
            <person name="Pisapia D.J."/>
            <person name="Chaudhuri J."/>
            <person name="Petrini J.J.H."/>
            <person name="Mosammaparast N."/>
            <person name="Amarasinghe G.K."/>
            <person name="Zha S."/>
            <person name="Tyler J.K."/>
            <person name="Sleckman B.P."/>
        </authorList>
    </citation>
    <scope>FUNCTION</scope>
    <scope>DISRUPTION PHENOTYPE</scope>
</reference>
<keyword id="KW-0025">Alternative splicing</keyword>
<keyword id="KW-0158">Chromosome</keyword>
<keyword id="KW-0175">Coiled coil</keyword>
<keyword id="KW-0227">DNA damage</keyword>
<keyword id="KW-0234">DNA repair</keyword>
<keyword id="KW-0238">DNA-binding</keyword>
<keyword id="KW-0539">Nucleus</keyword>
<keyword id="KW-0597">Phosphoprotein</keyword>
<keyword id="KW-1185">Reference proteome</keyword>
<accession>Q3KNJ2</accession>
<accession>A2RT39</accession>
<accession>Q99JK0</accession>
<accession>Q9D9U0</accession>
<evidence type="ECO:0000250" key="1">
    <source>
        <dbReference type="UniProtKB" id="A0A1L8ENT6"/>
    </source>
</evidence>
<evidence type="ECO:0000250" key="2">
    <source>
        <dbReference type="UniProtKB" id="Q9H9Q4"/>
    </source>
</evidence>
<evidence type="ECO:0000256" key="3">
    <source>
        <dbReference type="SAM" id="MobiDB-lite"/>
    </source>
</evidence>
<evidence type="ECO:0000269" key="4">
    <source>
    </source>
</evidence>
<evidence type="ECO:0000269" key="5">
    <source>
    </source>
</evidence>
<evidence type="ECO:0000269" key="6">
    <source>
    </source>
</evidence>
<evidence type="ECO:0000269" key="7">
    <source>
    </source>
</evidence>
<evidence type="ECO:0000269" key="8">
    <source>
    </source>
</evidence>
<evidence type="ECO:0000269" key="9">
    <source>
    </source>
</evidence>
<evidence type="ECO:0000269" key="10">
    <source>
    </source>
</evidence>
<evidence type="ECO:0000269" key="11">
    <source>
    </source>
</evidence>
<evidence type="ECO:0000269" key="12">
    <source>
    </source>
</evidence>
<evidence type="ECO:0000303" key="13">
    <source>
    </source>
</evidence>
<evidence type="ECO:0000303" key="14">
    <source>
    </source>
</evidence>
<evidence type="ECO:0000305" key="15"/>
<evidence type="ECO:0000312" key="16">
    <source>
        <dbReference type="MGI" id="MGI:1922820"/>
    </source>
</evidence>
<evidence type="ECO:0007744" key="17">
    <source>
    </source>
</evidence>
<sequence>MEELEQDLLLQPWAWLQLAENSLLAKVSITKHGYALLISDLQQVWHEQVDTSVVSQRAKELNKRLTAPPAALLCHLDEALRPLFKDSAHPSKATFSCDRGEEGLILRVQSELSGLPFSWHFHCIPASSSLVSQHLIHPLMGVSLALQSHVRELAALLRMKDLEIQAYQESGAVLSRSRLKTEPFEENSFLEQFMAEKLPEACAVGDGKPFAMSLQSLYVAVTKQQIQARQAHKDSGETQASSSTSPRGTDNQPEEPVSLSSTLSEPEYEPVAASGPMHRARLVKSKRKKPRGLFS</sequence>